<name>FLAA_TREPH</name>
<organism>
    <name type="scientific">Treponema phagedenis</name>
    <dbReference type="NCBI Taxonomy" id="162"/>
    <lineage>
        <taxon>Bacteria</taxon>
        <taxon>Pseudomonadati</taxon>
        <taxon>Spirochaetota</taxon>
        <taxon>Spirochaetia</taxon>
        <taxon>Spirochaetales</taxon>
        <taxon>Treponemataceae</taxon>
        <taxon>Treponema</taxon>
    </lineage>
</organism>
<keyword id="KW-0975">Bacterial flagellum</keyword>
<keyword id="KW-0903">Direct protein sequencing</keyword>
<keyword id="KW-0574">Periplasm</keyword>
<gene>
    <name type="primary">flaA</name>
</gene>
<proteinExistence type="evidence at protein level"/>
<sequence>EQATLIDFGKLNADIVPDKNGGMTQ</sequence>
<comment type="function">
    <text>Component of the outer layer of the flagella.</text>
</comment>
<comment type="subunit">
    <text>The flagellum consists of an outer layer composed of repeating units of FlaA around a core that contains several antigenically related polypeptides.</text>
</comment>
<comment type="subcellular location">
    <subcellularLocation>
        <location>Periplasmic flagellum</location>
    </subcellularLocation>
    <subcellularLocation>
        <location>Periplasm</location>
    </subcellularLocation>
</comment>
<feature type="chain" id="PRO_0000180987" description="Flagellar filament outer layer protein">
    <location>
        <begin position="1"/>
        <end position="25" status="greater than"/>
    </location>
</feature>
<feature type="non-terminal residue">
    <location>
        <position position="25"/>
    </location>
</feature>
<accession>P21983</accession>
<protein>
    <recommendedName>
        <fullName>Flagellar filament outer layer protein</fullName>
    </recommendedName>
    <alternativeName>
        <fullName>Sheath protein</fullName>
    </alternativeName>
</protein>
<dbReference type="PIR" id="B32351">
    <property type="entry name" value="B32351"/>
</dbReference>
<dbReference type="GO" id="GO:0055040">
    <property type="term" value="C:periplasmic flagellum"/>
    <property type="evidence" value="ECO:0007669"/>
    <property type="project" value="UniProtKB-SubCell"/>
</dbReference>
<reference key="1">
    <citation type="journal article" date="1988" name="J. Bacteriol.">
        <title>Antigenic relatedness and N-terminal sequence homology define two classes of periplasmic flagellar proteins of Treponema pallidum subsp. pallidum and Treponema phagedenis.</title>
        <authorList>
            <person name="Norris S.J."/>
            <person name="Charon N.W."/>
            <person name="Cook R.G."/>
            <person name="Fuentes M.D."/>
            <person name="Limberger R.J."/>
        </authorList>
    </citation>
    <scope>PROTEIN SEQUENCE</scope>
</reference>